<protein>
    <recommendedName>
        <fullName>5'-3' exoribonuclease 2</fullName>
        <ecNumber>3.1.13.-</ecNumber>
    </recommendedName>
    <alternativeName>
        <fullName>Exoribonuclease 1</fullName>
    </alternativeName>
</protein>
<evidence type="ECO:0000250" key="1"/>
<evidence type="ECO:0000250" key="2">
    <source>
        <dbReference type="UniProtKB" id="P40848"/>
    </source>
</evidence>
<evidence type="ECO:0000250" key="3">
    <source>
        <dbReference type="UniProtKB" id="Q02792"/>
    </source>
</evidence>
<evidence type="ECO:0000255" key="4"/>
<evidence type="ECO:0000256" key="5">
    <source>
        <dbReference type="SAM" id="MobiDB-lite"/>
    </source>
</evidence>
<evidence type="ECO:0000305" key="6"/>
<reference key="1">
    <citation type="journal article" date="2003" name="Nucleic Acids Res.">
        <title>What's in the genome of a filamentous fungus? Analysis of the Neurospora genome sequence.</title>
        <authorList>
            <person name="Mannhaupt G."/>
            <person name="Montrone C."/>
            <person name="Haase D."/>
            <person name="Mewes H.-W."/>
            <person name="Aign V."/>
            <person name="Hoheisel J.D."/>
            <person name="Fartmann B."/>
            <person name="Nyakatura G."/>
            <person name="Kempken F."/>
            <person name="Maier J."/>
            <person name="Schulte U."/>
        </authorList>
    </citation>
    <scope>NUCLEOTIDE SEQUENCE [LARGE SCALE GENOMIC DNA]</scope>
    <source>
        <strain>ATCC 24698 / 74-OR23-1A / CBS 708.71 / DSM 1257 / FGSC 987</strain>
    </source>
</reference>
<reference key="2">
    <citation type="journal article" date="2003" name="Nature">
        <title>The genome sequence of the filamentous fungus Neurospora crassa.</title>
        <authorList>
            <person name="Galagan J.E."/>
            <person name="Calvo S.E."/>
            <person name="Borkovich K.A."/>
            <person name="Selker E.U."/>
            <person name="Read N.D."/>
            <person name="Jaffe D.B."/>
            <person name="FitzHugh W."/>
            <person name="Ma L.-J."/>
            <person name="Smirnov S."/>
            <person name="Purcell S."/>
            <person name="Rehman B."/>
            <person name="Elkins T."/>
            <person name="Engels R."/>
            <person name="Wang S."/>
            <person name="Nielsen C.B."/>
            <person name="Butler J."/>
            <person name="Endrizzi M."/>
            <person name="Qui D."/>
            <person name="Ianakiev P."/>
            <person name="Bell-Pedersen D."/>
            <person name="Nelson M.A."/>
            <person name="Werner-Washburne M."/>
            <person name="Selitrennikoff C.P."/>
            <person name="Kinsey J.A."/>
            <person name="Braun E.L."/>
            <person name="Zelter A."/>
            <person name="Schulte U."/>
            <person name="Kothe G.O."/>
            <person name="Jedd G."/>
            <person name="Mewes H.-W."/>
            <person name="Staben C."/>
            <person name="Marcotte E."/>
            <person name="Greenberg D."/>
            <person name="Roy A."/>
            <person name="Foley K."/>
            <person name="Naylor J."/>
            <person name="Stange-Thomann N."/>
            <person name="Barrett R."/>
            <person name="Gnerre S."/>
            <person name="Kamal M."/>
            <person name="Kamvysselis M."/>
            <person name="Mauceli E.W."/>
            <person name="Bielke C."/>
            <person name="Rudd S."/>
            <person name="Frishman D."/>
            <person name="Krystofova S."/>
            <person name="Rasmussen C."/>
            <person name="Metzenberg R.L."/>
            <person name="Perkins D.D."/>
            <person name="Kroken S."/>
            <person name="Cogoni C."/>
            <person name="Macino G."/>
            <person name="Catcheside D.E.A."/>
            <person name="Li W."/>
            <person name="Pratt R.J."/>
            <person name="Osmani S.A."/>
            <person name="DeSouza C.P.C."/>
            <person name="Glass N.L."/>
            <person name="Orbach M.J."/>
            <person name="Berglund J.A."/>
            <person name="Voelker R."/>
            <person name="Yarden O."/>
            <person name="Plamann M."/>
            <person name="Seiler S."/>
            <person name="Dunlap J.C."/>
            <person name="Radford A."/>
            <person name="Aramayo R."/>
            <person name="Natvig D.O."/>
            <person name="Alex L.A."/>
            <person name="Mannhaupt G."/>
            <person name="Ebbole D.J."/>
            <person name="Freitag M."/>
            <person name="Paulsen I."/>
            <person name="Sachs M.S."/>
            <person name="Lander E.S."/>
            <person name="Nusbaum C."/>
            <person name="Birren B.W."/>
        </authorList>
    </citation>
    <scope>NUCLEOTIDE SEQUENCE [LARGE SCALE GENOMIC DNA]</scope>
    <source>
        <strain>ATCC 24698 / 74-OR23-1A / CBS 708.71 / DSM 1257 / FGSC 987</strain>
    </source>
</reference>
<accession>Q8WZX5</accession>
<name>XRN2_NEUCR</name>
<organism>
    <name type="scientific">Neurospora crassa (strain ATCC 24698 / 74-OR23-1A / CBS 708.71 / DSM 1257 / FGSC 987)</name>
    <dbReference type="NCBI Taxonomy" id="367110"/>
    <lineage>
        <taxon>Eukaryota</taxon>
        <taxon>Fungi</taxon>
        <taxon>Dikarya</taxon>
        <taxon>Ascomycota</taxon>
        <taxon>Pezizomycotina</taxon>
        <taxon>Sordariomycetes</taxon>
        <taxon>Sordariomycetidae</taxon>
        <taxon>Sordariales</taxon>
        <taxon>Sordariaceae</taxon>
        <taxon>Neurospora</taxon>
    </lineage>
</organism>
<sequence length="1072" mass="118310">MGIPAAFRWLSTKYPKIISPVIEDQPITMPDGTVIPVDATKPNPNGEEFDNLYLDMNGIVHPCSHPEDRPAPKDEEEMMVEVFKYTDRVVNMVRPRKLLMIAVDGVAPRAKMNQQRSRRFRAAREAMEKEEDKQKFVELLKKQNGKPQEEEPVEVVVKKAFDSNSITPGTPFMDILAASLRYWCSYKLNTDPAWANIKVIISDATVPGEGEHKIMEFVRSQRGSPNHDPNTRHVIYGLDADLIMLGLATHEPHFRVLREDVFAQDSRPRLCKICGQKGHDAMNCKGEAKEKNGEFDEKDAVVPLKPFIWLHVSILREYLAIELDVPGLPFQFNLERAIDDWVFMCFFVGNDFLPHLPALEIRENGIDTLTAIWKDNLPVMGGYLTKDGHADLERVQYIMAGLAKQEDAIFRRRKETEDRREAGFKRRKLADEARQRRAQGSRQIRQAAENSGPPAGFSFHKINEFPGKAPQPSITHDMVVNRQAVDQANVANKSAASVLKDQIKSMMAQGTSTPENGAESTETPAETAAAAPATEEQAAPPAALGKRKAELIEDAVAGPEASSTEVTEISESDAEPTDSVRLWEEGYADRYYEQKFKVDRKDIDFRHKVGRAYAEGLAWVLEYYFQGCPSWEWFYPYHYAPFAADFVDLGKMEIKFEKGRISRPFEQLMSVLPAASRHAIPEVFHSLMLEETSEIRHFYPDDFEIDLNGKKMAWQGVALLPFIDMPRLLAAMETKSHLLSPEDHLRNAPGKDYLLLSDSHPTLYDHITSQFYSKKQGTTKFELDPTKSAGLSGLVEKIDGYVPHGSLVYPLSRNSMPDVDYDRSLMVHYFFPDCSHTHKSMLLRGVQMPTPALTRSDIDILKGKASRSGRSYGGVPLSNKNYSGRNEPINYGPGGGQQGGRGRGGYQGGGGRGGGRGGYGGNGGGYQANGGGYYNGGNNGGGGGGYGGQPRDSYGPPPGWQPPPPPGLAGFGVGPPPPPPGAAYGGAPGGAGYGGYGSSRGGYQDNRYALPPPPPQAYQAQGQQYGQGGSRGGYQGQGNQYRGPPRQDRGYDNRGGYRGGGYRGGGDNRGYR</sequence>
<dbReference type="EC" id="3.1.13.-"/>
<dbReference type="EMBL" id="AL670543">
    <property type="protein sequence ID" value="CAD21516.1"/>
    <property type="molecule type" value="Genomic_DNA"/>
</dbReference>
<dbReference type="EMBL" id="CM002237">
    <property type="protein sequence ID" value="EAA27029.1"/>
    <property type="molecule type" value="Genomic_DNA"/>
</dbReference>
<dbReference type="RefSeq" id="XP_956265.1">
    <property type="nucleotide sequence ID" value="XM_951172.2"/>
</dbReference>
<dbReference type="SMR" id="Q8WZX5"/>
<dbReference type="FunCoup" id="Q8WZX5">
    <property type="interactions" value="1029"/>
</dbReference>
<dbReference type="STRING" id="367110.Q8WZX5"/>
<dbReference type="PaxDb" id="5141-EFNCRP00000001742"/>
<dbReference type="EnsemblFungi" id="EAA27029">
    <property type="protein sequence ID" value="EAA27029"/>
    <property type="gene ID" value="NCU01643"/>
</dbReference>
<dbReference type="GeneID" id="3872420"/>
<dbReference type="KEGG" id="ncr:NCU01643"/>
<dbReference type="VEuPathDB" id="FungiDB:NCU01643"/>
<dbReference type="HOGENOM" id="CLU_006038_1_1_1"/>
<dbReference type="InParanoid" id="Q8WZX5"/>
<dbReference type="OrthoDB" id="372487at2759"/>
<dbReference type="Proteomes" id="UP000001805">
    <property type="component" value="Chromosome 6, Linkage Group II"/>
</dbReference>
<dbReference type="GO" id="GO:0005634">
    <property type="term" value="C:nucleus"/>
    <property type="evidence" value="ECO:0000318"/>
    <property type="project" value="GO_Central"/>
</dbReference>
<dbReference type="GO" id="GO:0004534">
    <property type="term" value="F:5'-3' RNA exonuclease activity"/>
    <property type="evidence" value="ECO:0000318"/>
    <property type="project" value="GO_Central"/>
</dbReference>
<dbReference type="GO" id="GO:0003723">
    <property type="term" value="F:RNA binding"/>
    <property type="evidence" value="ECO:0000318"/>
    <property type="project" value="GO_Central"/>
</dbReference>
<dbReference type="GO" id="GO:0008270">
    <property type="term" value="F:zinc ion binding"/>
    <property type="evidence" value="ECO:0007669"/>
    <property type="project" value="UniProtKB-KW"/>
</dbReference>
<dbReference type="GO" id="GO:0006353">
    <property type="term" value="P:DNA-templated transcription termination"/>
    <property type="evidence" value="ECO:0007669"/>
    <property type="project" value="UniProtKB-KW"/>
</dbReference>
<dbReference type="GO" id="GO:0006397">
    <property type="term" value="P:mRNA processing"/>
    <property type="evidence" value="ECO:0007669"/>
    <property type="project" value="UniProtKB-KW"/>
</dbReference>
<dbReference type="GO" id="GO:0000956">
    <property type="term" value="P:nuclear-transcribed mRNA catabolic process"/>
    <property type="evidence" value="ECO:0000318"/>
    <property type="project" value="GO_Central"/>
</dbReference>
<dbReference type="GO" id="GO:0051984">
    <property type="term" value="P:positive regulation of chromosome segregation"/>
    <property type="evidence" value="ECO:0007669"/>
    <property type="project" value="EnsemblFungi"/>
</dbReference>
<dbReference type="GO" id="GO:0180037">
    <property type="term" value="P:rapid tRNA decay"/>
    <property type="evidence" value="ECO:0007669"/>
    <property type="project" value="EnsemblFungi"/>
</dbReference>
<dbReference type="GO" id="GO:0006364">
    <property type="term" value="P:rRNA processing"/>
    <property type="evidence" value="ECO:0007669"/>
    <property type="project" value="UniProtKB-KW"/>
</dbReference>
<dbReference type="CDD" id="cd18673">
    <property type="entry name" value="PIN_XRN1-2-like"/>
    <property type="match status" value="1"/>
</dbReference>
<dbReference type="FunFam" id="1.25.40.1050:FF:000002">
    <property type="entry name" value="5'-3' exoribonuclease"/>
    <property type="match status" value="1"/>
</dbReference>
<dbReference type="FunFam" id="3.40.50.12390:FF:000003">
    <property type="entry name" value="5'-3' exoribonuclease"/>
    <property type="match status" value="1"/>
</dbReference>
<dbReference type="FunFam" id="3.40.50.12390:FF:000005">
    <property type="entry name" value="5'-3' exoribonuclease 2"/>
    <property type="match status" value="1"/>
</dbReference>
<dbReference type="Gene3D" id="1.25.40.1050">
    <property type="match status" value="1"/>
</dbReference>
<dbReference type="Gene3D" id="3.40.50.12390">
    <property type="match status" value="2"/>
</dbReference>
<dbReference type="InterPro" id="IPR027073">
    <property type="entry name" value="5_3_exoribonuclease"/>
</dbReference>
<dbReference type="InterPro" id="IPR041412">
    <property type="entry name" value="Xrn1_helical"/>
</dbReference>
<dbReference type="InterPro" id="IPR004859">
    <property type="entry name" value="Xrn1_N"/>
</dbReference>
<dbReference type="InterPro" id="IPR017151">
    <property type="entry name" value="Xrn2/3/4"/>
</dbReference>
<dbReference type="PANTHER" id="PTHR12341:SF41">
    <property type="entry name" value="5'-3' EXORIBONUCLEASE 2"/>
    <property type="match status" value="1"/>
</dbReference>
<dbReference type="PANTHER" id="PTHR12341">
    <property type="entry name" value="5'-&gt;3' EXORIBONUCLEASE"/>
    <property type="match status" value="1"/>
</dbReference>
<dbReference type="Pfam" id="PF17846">
    <property type="entry name" value="XRN_M"/>
    <property type="match status" value="1"/>
</dbReference>
<dbReference type="Pfam" id="PF03159">
    <property type="entry name" value="XRN_N"/>
    <property type="match status" value="1"/>
</dbReference>
<dbReference type="PIRSF" id="PIRSF037239">
    <property type="entry name" value="Exonuclease_Xrn2"/>
    <property type="match status" value="1"/>
</dbReference>
<proteinExistence type="inferred from homology"/>
<feature type="initiator methionine" description="Removed" evidence="1">
    <location>
        <position position="1"/>
    </location>
</feature>
<feature type="chain" id="PRO_0000249928" description="5'-3' exoribonuclease 2">
    <location>
        <begin position="2"/>
        <end position="1072"/>
    </location>
</feature>
<feature type="zinc finger region" description="CCHC-type">
    <location>
        <begin position="269"/>
        <end position="286"/>
    </location>
</feature>
<feature type="region of interest" description="Disordered" evidence="5">
    <location>
        <begin position="414"/>
        <end position="459"/>
    </location>
</feature>
<feature type="region of interest" description="Disordered" evidence="5">
    <location>
        <begin position="509"/>
        <end position="577"/>
    </location>
</feature>
<feature type="region of interest" description="Disordered" evidence="5">
    <location>
        <begin position="865"/>
        <end position="911"/>
    </location>
</feature>
<feature type="region of interest" description="Disordered" evidence="5">
    <location>
        <begin position="943"/>
        <end position="1072"/>
    </location>
</feature>
<feature type="coiled-coil region" evidence="4">
    <location>
        <begin position="118"/>
        <end position="144"/>
    </location>
</feature>
<feature type="compositionally biased region" description="Basic and acidic residues" evidence="5">
    <location>
        <begin position="414"/>
        <end position="435"/>
    </location>
</feature>
<feature type="compositionally biased region" description="Low complexity" evidence="5">
    <location>
        <begin position="518"/>
        <end position="543"/>
    </location>
</feature>
<feature type="compositionally biased region" description="Gly residues" evidence="5">
    <location>
        <begin position="892"/>
        <end position="911"/>
    </location>
</feature>
<feature type="compositionally biased region" description="Pro residues" evidence="5">
    <location>
        <begin position="955"/>
        <end position="967"/>
    </location>
</feature>
<feature type="compositionally biased region" description="Gly residues" evidence="5">
    <location>
        <begin position="983"/>
        <end position="1000"/>
    </location>
</feature>
<feature type="compositionally biased region" description="Gly residues" evidence="5">
    <location>
        <begin position="1025"/>
        <end position="1036"/>
    </location>
</feature>
<feature type="compositionally biased region" description="Gly residues" evidence="5">
    <location>
        <begin position="1056"/>
        <end position="1072"/>
    </location>
</feature>
<comment type="function">
    <text evidence="2 3">Possesses 5'-&gt;3' exoribonuclease activity (By similarity). Required for the processing of nuclear mRNA and rRNA precursors. May promote the termination of transcription by RNA polymerase II (By similarity). Essential for vegetative cell growth and chromosome segregation (By similarity).</text>
</comment>
<comment type="subunit">
    <text evidence="2">Interacts with rai1; the interaction is direct, stabilizes exr-1 protein structure and may stimulate its exoribonuclease activity (By similarity). The interaction also stimulates rai1 pyrophosphohydrolase activity, probably by recruiting it to mRNA substrates (By similarity).</text>
</comment>
<comment type="subcellular location">
    <subcellularLocation>
        <location evidence="1">Nucleus</location>
    </subcellularLocation>
</comment>
<comment type="similarity">
    <text evidence="6">Belongs to the 5'-3' exonuclease family. XRN2/RAT1 subfamily.</text>
</comment>
<gene>
    <name type="primary">exr-1</name>
    <name type="synonym">rat1</name>
    <name type="ORF">B7K22.110</name>
    <name type="ORF">NCU01643</name>
</gene>
<keyword id="KW-0175">Coiled coil</keyword>
<keyword id="KW-0269">Exonuclease</keyword>
<keyword id="KW-0378">Hydrolase</keyword>
<keyword id="KW-0479">Metal-binding</keyword>
<keyword id="KW-0507">mRNA processing</keyword>
<keyword id="KW-0540">Nuclease</keyword>
<keyword id="KW-0539">Nucleus</keyword>
<keyword id="KW-1185">Reference proteome</keyword>
<keyword id="KW-0698">rRNA processing</keyword>
<keyword id="KW-0804">Transcription</keyword>
<keyword id="KW-0805">Transcription regulation</keyword>
<keyword id="KW-0806">Transcription termination</keyword>
<keyword id="KW-0862">Zinc</keyword>
<keyword id="KW-0863">Zinc-finger</keyword>